<reference key="1">
    <citation type="journal article" date="2006" name="Nat. Biotechnol.">
        <title>Complete genome sequence of the entomopathogenic and metabolically versatile soil bacterium Pseudomonas entomophila.</title>
        <authorList>
            <person name="Vodovar N."/>
            <person name="Vallenet D."/>
            <person name="Cruveiller S."/>
            <person name="Rouy Z."/>
            <person name="Barbe V."/>
            <person name="Acosta C."/>
            <person name="Cattolico L."/>
            <person name="Jubin C."/>
            <person name="Lajus A."/>
            <person name="Segurens B."/>
            <person name="Vacherie B."/>
            <person name="Wincker P."/>
            <person name="Weissenbach J."/>
            <person name="Lemaitre B."/>
            <person name="Medigue C."/>
            <person name="Boccard F."/>
        </authorList>
    </citation>
    <scope>NUCLEOTIDE SEQUENCE [LARGE SCALE GENOMIC DNA]</scope>
    <source>
        <strain>L48</strain>
    </source>
</reference>
<dbReference type="EMBL" id="CT573326">
    <property type="protein sequence ID" value="CAK13432.1"/>
    <property type="molecule type" value="Genomic_DNA"/>
</dbReference>
<dbReference type="RefSeq" id="WP_003246741.1">
    <property type="nucleotide sequence ID" value="NC_008027.1"/>
</dbReference>
<dbReference type="SMR" id="Q1IFX0"/>
<dbReference type="STRING" id="384676.PSEEN0485"/>
<dbReference type="GeneID" id="97165975"/>
<dbReference type="KEGG" id="pen:PSEEN0485"/>
<dbReference type="eggNOG" id="COG0049">
    <property type="taxonomic scope" value="Bacteria"/>
</dbReference>
<dbReference type="HOGENOM" id="CLU_072226_1_1_6"/>
<dbReference type="OrthoDB" id="9807653at2"/>
<dbReference type="Proteomes" id="UP000000658">
    <property type="component" value="Chromosome"/>
</dbReference>
<dbReference type="GO" id="GO:0015935">
    <property type="term" value="C:small ribosomal subunit"/>
    <property type="evidence" value="ECO:0007669"/>
    <property type="project" value="InterPro"/>
</dbReference>
<dbReference type="GO" id="GO:0019843">
    <property type="term" value="F:rRNA binding"/>
    <property type="evidence" value="ECO:0007669"/>
    <property type="project" value="UniProtKB-UniRule"/>
</dbReference>
<dbReference type="GO" id="GO:0003735">
    <property type="term" value="F:structural constituent of ribosome"/>
    <property type="evidence" value="ECO:0007669"/>
    <property type="project" value="InterPro"/>
</dbReference>
<dbReference type="GO" id="GO:0000049">
    <property type="term" value="F:tRNA binding"/>
    <property type="evidence" value="ECO:0007669"/>
    <property type="project" value="UniProtKB-UniRule"/>
</dbReference>
<dbReference type="GO" id="GO:0006412">
    <property type="term" value="P:translation"/>
    <property type="evidence" value="ECO:0007669"/>
    <property type="project" value="UniProtKB-UniRule"/>
</dbReference>
<dbReference type="CDD" id="cd14869">
    <property type="entry name" value="uS7_Bacteria"/>
    <property type="match status" value="1"/>
</dbReference>
<dbReference type="FunFam" id="1.10.455.10:FF:000001">
    <property type="entry name" value="30S ribosomal protein S7"/>
    <property type="match status" value="1"/>
</dbReference>
<dbReference type="Gene3D" id="1.10.455.10">
    <property type="entry name" value="Ribosomal protein S7 domain"/>
    <property type="match status" value="1"/>
</dbReference>
<dbReference type="HAMAP" id="MF_00480_B">
    <property type="entry name" value="Ribosomal_uS7_B"/>
    <property type="match status" value="1"/>
</dbReference>
<dbReference type="InterPro" id="IPR000235">
    <property type="entry name" value="Ribosomal_uS7"/>
</dbReference>
<dbReference type="InterPro" id="IPR005717">
    <property type="entry name" value="Ribosomal_uS7_bac/org-type"/>
</dbReference>
<dbReference type="InterPro" id="IPR020606">
    <property type="entry name" value="Ribosomal_uS7_CS"/>
</dbReference>
<dbReference type="InterPro" id="IPR023798">
    <property type="entry name" value="Ribosomal_uS7_dom"/>
</dbReference>
<dbReference type="InterPro" id="IPR036823">
    <property type="entry name" value="Ribosomal_uS7_dom_sf"/>
</dbReference>
<dbReference type="NCBIfam" id="TIGR01029">
    <property type="entry name" value="rpsG_bact"/>
    <property type="match status" value="1"/>
</dbReference>
<dbReference type="PANTHER" id="PTHR11205">
    <property type="entry name" value="RIBOSOMAL PROTEIN S7"/>
    <property type="match status" value="1"/>
</dbReference>
<dbReference type="Pfam" id="PF00177">
    <property type="entry name" value="Ribosomal_S7"/>
    <property type="match status" value="1"/>
</dbReference>
<dbReference type="PIRSF" id="PIRSF002122">
    <property type="entry name" value="RPS7p_RPS7a_RPS5e_RPS7o"/>
    <property type="match status" value="1"/>
</dbReference>
<dbReference type="SUPFAM" id="SSF47973">
    <property type="entry name" value="Ribosomal protein S7"/>
    <property type="match status" value="1"/>
</dbReference>
<dbReference type="PROSITE" id="PS00052">
    <property type="entry name" value="RIBOSOMAL_S7"/>
    <property type="match status" value="1"/>
</dbReference>
<name>RS7_PSEE4</name>
<organism>
    <name type="scientific">Pseudomonas entomophila (strain L48)</name>
    <dbReference type="NCBI Taxonomy" id="384676"/>
    <lineage>
        <taxon>Bacteria</taxon>
        <taxon>Pseudomonadati</taxon>
        <taxon>Pseudomonadota</taxon>
        <taxon>Gammaproteobacteria</taxon>
        <taxon>Pseudomonadales</taxon>
        <taxon>Pseudomonadaceae</taxon>
        <taxon>Pseudomonas</taxon>
    </lineage>
</organism>
<evidence type="ECO:0000255" key="1">
    <source>
        <dbReference type="HAMAP-Rule" id="MF_00480"/>
    </source>
</evidence>
<evidence type="ECO:0000305" key="2"/>
<comment type="function">
    <text evidence="1">One of the primary rRNA binding proteins, it binds directly to 16S rRNA where it nucleates assembly of the head domain of the 30S subunit. Is located at the subunit interface close to the decoding center, probably blocks exit of the E-site tRNA.</text>
</comment>
<comment type="subunit">
    <text evidence="1">Part of the 30S ribosomal subunit. Contacts proteins S9 and S11.</text>
</comment>
<comment type="similarity">
    <text evidence="1">Belongs to the universal ribosomal protein uS7 family.</text>
</comment>
<accession>Q1IFX0</accession>
<keyword id="KW-0687">Ribonucleoprotein</keyword>
<keyword id="KW-0689">Ribosomal protein</keyword>
<keyword id="KW-0694">RNA-binding</keyword>
<keyword id="KW-0699">rRNA-binding</keyword>
<keyword id="KW-0820">tRNA-binding</keyword>
<proteinExistence type="inferred from homology"/>
<feature type="chain" id="PRO_1000014262" description="Small ribosomal subunit protein uS7">
    <location>
        <begin position="1"/>
        <end position="156"/>
    </location>
</feature>
<gene>
    <name evidence="1" type="primary">rpsG</name>
    <name type="ordered locus">PSEEN0485</name>
</gene>
<protein>
    <recommendedName>
        <fullName evidence="1">Small ribosomal subunit protein uS7</fullName>
    </recommendedName>
    <alternativeName>
        <fullName evidence="2">30S ribosomal protein S7</fullName>
    </alternativeName>
</protein>
<sequence>MPRRRVAAKREILDDPKYGSQILAKFMNHVMESGKKAVAERIVYGALDTVKARKNSDPLEIFEKALDAIAPLVEVKSRRVGGATYQVPVEVRPSRRNALAMRWLVDYARKRGEKSMALRLAGELLDAAEGKGAAVKKREDVHRMAEANKAFSHYRF</sequence>